<organism>
    <name type="scientific">Micrococcus luteus (strain ATCC 4698 / DSM 20030 / JCM 1464 / CCM 169 / CCUG 5858 / IAM 1056 / NBRC 3333 / NCIMB 9278 / NCTC 2665 / VKM Ac-2230)</name>
    <name type="common">Micrococcus lysodeikticus</name>
    <dbReference type="NCBI Taxonomy" id="465515"/>
    <lineage>
        <taxon>Bacteria</taxon>
        <taxon>Bacillati</taxon>
        <taxon>Actinomycetota</taxon>
        <taxon>Actinomycetes</taxon>
        <taxon>Micrococcales</taxon>
        <taxon>Micrococcaceae</taxon>
        <taxon>Micrococcus</taxon>
    </lineage>
</organism>
<accession>C5CBP2</accession>
<gene>
    <name evidence="1" type="primary">whiA</name>
    <name type="ordered locus">Mlut_11330</name>
</gene>
<name>WHIA_MICLC</name>
<proteinExistence type="inferred from homology"/>
<reference key="1">
    <citation type="journal article" date="2010" name="J. Bacteriol.">
        <title>Genome sequence of the Fleming strain of Micrococcus luteus, a simple free-living actinobacterium.</title>
        <authorList>
            <person name="Young M."/>
            <person name="Artsatbanov V."/>
            <person name="Beller H.R."/>
            <person name="Chandra G."/>
            <person name="Chater K.F."/>
            <person name="Dover L.G."/>
            <person name="Goh E.B."/>
            <person name="Kahan T."/>
            <person name="Kaprelyants A.S."/>
            <person name="Kyrpides N."/>
            <person name="Lapidus A."/>
            <person name="Lowry S.R."/>
            <person name="Lykidis A."/>
            <person name="Mahillon J."/>
            <person name="Markowitz V."/>
            <person name="Mavromatis K."/>
            <person name="Mukamolova G.V."/>
            <person name="Oren A."/>
            <person name="Rokem J.S."/>
            <person name="Smith M.C."/>
            <person name="Young D.I."/>
            <person name="Greenblatt C.L."/>
        </authorList>
    </citation>
    <scope>NUCLEOTIDE SEQUENCE [LARGE SCALE GENOMIC DNA]</scope>
    <source>
        <strain>ATCC 4698 / DSM 20030 / JCM 1464 / CCM 169 / CCUG 5858 / IAM 1056 / NBRC 3333 / NCIMB 9278 / NCTC 2665 / VKM Ac-2230</strain>
    </source>
</reference>
<sequence>MALTMTLKEELARVPVAATPERRAETAAMLRFAGGLHLVAGRVVVEAELDHGASVRRLRAAITELYGLAPEIVVVSGGNLRRGQRYVLRVVRGGEDLARQTGLIDQRGRPVRGLAPALVSGTTAATAAVWRGALLAHGSLTEPGRSAALEVTTPGPEAALALVGAARRLHVAAKAREVRQSDRVVVRDGEAIATLLAAVGAEQTATLWRERRERKEVRATANRLANFDDANLRRSAQAAVMAGAKVERALEILGDEVPDHLRYAGRLRLEHKQASLDELGRLADPPMTKDAVAGRIRRLLAMADKRAAERGIPGTDAASEG</sequence>
<dbReference type="EMBL" id="CP001628">
    <property type="protein sequence ID" value="ACS30639.1"/>
    <property type="molecule type" value="Genomic_DNA"/>
</dbReference>
<dbReference type="RefSeq" id="WP_010078720.1">
    <property type="nucleotide sequence ID" value="NC_012803.1"/>
</dbReference>
<dbReference type="SMR" id="C5CBP2"/>
<dbReference type="STRING" id="465515.Mlut_11330"/>
<dbReference type="EnsemblBacteria" id="ACS30639">
    <property type="protein sequence ID" value="ACS30639"/>
    <property type="gene ID" value="Mlut_11330"/>
</dbReference>
<dbReference type="GeneID" id="93345290"/>
<dbReference type="KEGG" id="mlu:Mlut_11330"/>
<dbReference type="PATRIC" id="fig|465515.4.peg.1075"/>
<dbReference type="eggNOG" id="COG1481">
    <property type="taxonomic scope" value="Bacteria"/>
</dbReference>
<dbReference type="HOGENOM" id="CLU_053282_0_0_11"/>
<dbReference type="Proteomes" id="UP000000738">
    <property type="component" value="Chromosome"/>
</dbReference>
<dbReference type="GO" id="GO:0003677">
    <property type="term" value="F:DNA binding"/>
    <property type="evidence" value="ECO:0007669"/>
    <property type="project" value="UniProtKB-UniRule"/>
</dbReference>
<dbReference type="GO" id="GO:0051301">
    <property type="term" value="P:cell division"/>
    <property type="evidence" value="ECO:0007669"/>
    <property type="project" value="UniProtKB-UniRule"/>
</dbReference>
<dbReference type="GO" id="GO:0043937">
    <property type="term" value="P:regulation of sporulation"/>
    <property type="evidence" value="ECO:0007669"/>
    <property type="project" value="InterPro"/>
</dbReference>
<dbReference type="FunFam" id="3.10.28.10:FF:000001">
    <property type="entry name" value="Probable cell division protein WhiA"/>
    <property type="match status" value="1"/>
</dbReference>
<dbReference type="Gene3D" id="3.10.28.10">
    <property type="entry name" value="Homing endonucleases"/>
    <property type="match status" value="1"/>
</dbReference>
<dbReference type="HAMAP" id="MF_01420">
    <property type="entry name" value="HTH_type_WhiA"/>
    <property type="match status" value="1"/>
</dbReference>
<dbReference type="InterPro" id="IPR027434">
    <property type="entry name" value="Homing_endonucl"/>
</dbReference>
<dbReference type="InterPro" id="IPR018478">
    <property type="entry name" value="Sporu_reg_WhiA_N_dom"/>
</dbReference>
<dbReference type="InterPro" id="IPR003802">
    <property type="entry name" value="Sporulation_regulator_WhiA"/>
</dbReference>
<dbReference type="InterPro" id="IPR023054">
    <property type="entry name" value="Sporulation_regulator_WhiA_C"/>
</dbReference>
<dbReference type="InterPro" id="IPR039518">
    <property type="entry name" value="WhiA_LAGLIDADG_dom"/>
</dbReference>
<dbReference type="NCBIfam" id="TIGR00647">
    <property type="entry name" value="DNA_bind_WhiA"/>
    <property type="match status" value="1"/>
</dbReference>
<dbReference type="PANTHER" id="PTHR37307">
    <property type="entry name" value="CELL DIVISION PROTEIN WHIA-RELATED"/>
    <property type="match status" value="1"/>
</dbReference>
<dbReference type="PANTHER" id="PTHR37307:SF1">
    <property type="entry name" value="CELL DIVISION PROTEIN WHIA-RELATED"/>
    <property type="match status" value="1"/>
</dbReference>
<dbReference type="Pfam" id="PF02650">
    <property type="entry name" value="HTH_WhiA"/>
    <property type="match status" value="1"/>
</dbReference>
<dbReference type="Pfam" id="PF14527">
    <property type="entry name" value="LAGLIDADG_WhiA"/>
    <property type="match status" value="1"/>
</dbReference>
<dbReference type="Pfam" id="PF10298">
    <property type="entry name" value="WhiA_N"/>
    <property type="match status" value="1"/>
</dbReference>
<protein>
    <recommendedName>
        <fullName evidence="1">Probable cell division protein WhiA</fullName>
    </recommendedName>
</protein>
<comment type="function">
    <text evidence="1">Involved in cell division and chromosome segregation.</text>
</comment>
<comment type="similarity">
    <text evidence="1">Belongs to the WhiA family.</text>
</comment>
<keyword id="KW-0131">Cell cycle</keyword>
<keyword id="KW-0132">Cell division</keyword>
<keyword id="KW-0238">DNA-binding</keyword>
<keyword id="KW-1185">Reference proteome</keyword>
<feature type="chain" id="PRO_1000215259" description="Probable cell division protein WhiA">
    <location>
        <begin position="1"/>
        <end position="321"/>
    </location>
</feature>
<feature type="DNA-binding region" description="H-T-H motif" evidence="1">
    <location>
        <begin position="275"/>
        <end position="308"/>
    </location>
</feature>
<evidence type="ECO:0000255" key="1">
    <source>
        <dbReference type="HAMAP-Rule" id="MF_01420"/>
    </source>
</evidence>